<organism>
    <name type="scientific">Sorex araneus</name>
    <name type="common">Eurasian common shrew</name>
    <name type="synonym">European shrew</name>
    <dbReference type="NCBI Taxonomy" id="42254"/>
    <lineage>
        <taxon>Eukaryota</taxon>
        <taxon>Metazoa</taxon>
        <taxon>Chordata</taxon>
        <taxon>Craniata</taxon>
        <taxon>Vertebrata</taxon>
        <taxon>Euteleostomi</taxon>
        <taxon>Mammalia</taxon>
        <taxon>Eutheria</taxon>
        <taxon>Laurasiatheria</taxon>
        <taxon>Eulipotyphla</taxon>
        <taxon>Soricidae</taxon>
        <taxon>Soricinae</taxon>
        <taxon>Sorex</taxon>
    </lineage>
</organism>
<feature type="signal peptide" evidence="4">
    <location>
        <begin position="1"/>
        <end position="20"/>
    </location>
</feature>
<feature type="chain" id="PRO_0000035767" description="Transthyretin">
    <location>
        <begin position="21"/>
        <end position="147"/>
    </location>
</feature>
<feature type="binding site" evidence="2">
    <location>
        <position position="35"/>
    </location>
    <ligand>
        <name>L-thyroxine</name>
        <dbReference type="ChEBI" id="CHEBI:58448"/>
    </ligand>
</feature>
<feature type="binding site" evidence="2">
    <location>
        <position position="74"/>
    </location>
    <ligand>
        <name>L-thyroxine</name>
        <dbReference type="ChEBI" id="CHEBI:58448"/>
    </ligand>
</feature>
<feature type="binding site" evidence="2">
    <location>
        <position position="137"/>
    </location>
    <ligand>
        <name>L-thyroxine</name>
        <dbReference type="ChEBI" id="CHEBI:58448"/>
    </ligand>
</feature>
<feature type="modified residue" description="Sulfocysteine" evidence="2">
    <location>
        <position position="30"/>
    </location>
</feature>
<feature type="modified residue" description="4-carboxyglutamate" evidence="2">
    <location>
        <position position="62"/>
    </location>
</feature>
<feature type="glycosylation site" description="N-linked (GlcNAc...) asparagine" evidence="3">
    <location>
        <position position="118"/>
    </location>
</feature>
<keyword id="KW-0903">Direct protein sequencing</keyword>
<keyword id="KW-0301">Gamma-carboxyglutamic acid</keyword>
<keyword id="KW-0325">Glycoprotein</keyword>
<keyword id="KW-0372">Hormone</keyword>
<keyword id="KW-0964">Secreted</keyword>
<keyword id="KW-0732">Signal</keyword>
<keyword id="KW-0765">Sulfation</keyword>
<keyword id="KW-0795">Thyroid hormone</keyword>
<keyword id="KW-0813">Transport</keyword>
<dbReference type="EMBL" id="AJ223149">
    <property type="protein sequence ID" value="CAA11130.1"/>
    <property type="molecule type" value="mRNA"/>
</dbReference>
<dbReference type="RefSeq" id="NP_001267607.1">
    <property type="nucleotide sequence ID" value="NM_001280678.1"/>
</dbReference>
<dbReference type="SMR" id="O46654"/>
<dbReference type="GlyCosmos" id="O46654">
    <property type="glycosylation" value="1 site, No reported glycans"/>
</dbReference>
<dbReference type="GeneID" id="101549714"/>
<dbReference type="KEGG" id="sara:101549714"/>
<dbReference type="CTD" id="7276"/>
<dbReference type="HOGENOM" id="CLU_115536_2_0_1"/>
<dbReference type="OrthoDB" id="10265230at2759"/>
<dbReference type="TreeFam" id="TF300210"/>
<dbReference type="GO" id="GO:0005615">
    <property type="term" value="C:extracellular space"/>
    <property type="evidence" value="ECO:0007669"/>
    <property type="project" value="TreeGrafter"/>
</dbReference>
<dbReference type="GO" id="GO:0005179">
    <property type="term" value="F:hormone activity"/>
    <property type="evidence" value="ECO:0007669"/>
    <property type="project" value="UniProtKB-KW"/>
</dbReference>
<dbReference type="GO" id="GO:0070324">
    <property type="term" value="F:thyroid hormone binding"/>
    <property type="evidence" value="ECO:0007669"/>
    <property type="project" value="TreeGrafter"/>
</dbReference>
<dbReference type="GO" id="GO:0006144">
    <property type="term" value="P:purine nucleobase metabolic process"/>
    <property type="evidence" value="ECO:0007669"/>
    <property type="project" value="TreeGrafter"/>
</dbReference>
<dbReference type="FunFam" id="2.60.40.180:FF:000002">
    <property type="entry name" value="Transthyretin"/>
    <property type="match status" value="1"/>
</dbReference>
<dbReference type="Gene3D" id="2.60.40.180">
    <property type="entry name" value="Transthyretin/hydroxyisourate hydrolase domain"/>
    <property type="match status" value="1"/>
</dbReference>
<dbReference type="InterPro" id="IPR023418">
    <property type="entry name" value="Thyroxine_BS"/>
</dbReference>
<dbReference type="InterPro" id="IPR000895">
    <property type="entry name" value="Transthyretin/HIU_hydrolase"/>
</dbReference>
<dbReference type="InterPro" id="IPR023416">
    <property type="entry name" value="Transthyretin/HIU_hydrolase_d"/>
</dbReference>
<dbReference type="InterPro" id="IPR036817">
    <property type="entry name" value="Transthyretin/HIU_hydrolase_sf"/>
</dbReference>
<dbReference type="InterPro" id="IPR023419">
    <property type="entry name" value="Transthyretin_CS"/>
</dbReference>
<dbReference type="PANTHER" id="PTHR10395:SF12">
    <property type="entry name" value="TRANSTHYRETIN"/>
    <property type="match status" value="1"/>
</dbReference>
<dbReference type="PANTHER" id="PTHR10395">
    <property type="entry name" value="URICASE AND TRANSTHYRETIN-RELATED"/>
    <property type="match status" value="1"/>
</dbReference>
<dbReference type="Pfam" id="PF00576">
    <property type="entry name" value="Transthyretin"/>
    <property type="match status" value="1"/>
</dbReference>
<dbReference type="PRINTS" id="PR00189">
    <property type="entry name" value="TRNSTHYRETIN"/>
</dbReference>
<dbReference type="SMART" id="SM00095">
    <property type="entry name" value="TR_THY"/>
    <property type="match status" value="1"/>
</dbReference>
<dbReference type="SUPFAM" id="SSF49472">
    <property type="entry name" value="Transthyretin (synonym: prealbumin)"/>
    <property type="match status" value="1"/>
</dbReference>
<dbReference type="PROSITE" id="PS00768">
    <property type="entry name" value="TRANSTHYRETIN_1"/>
    <property type="match status" value="1"/>
</dbReference>
<dbReference type="PROSITE" id="PS00769">
    <property type="entry name" value="TRANSTHYRETIN_2"/>
    <property type="match status" value="1"/>
</dbReference>
<sequence>MASRRLLLLCLAGLVLVTEAGPTGTGQSKCPLMVKVLDAVQGSPAVNVAVRVFKKAADETWEPFASGKTSEFGELHGLTTDEKFVEGIIKVELDTKTYWKALGISPFHEYVEVVFHANDSGKRRYTIAALLSPYSYSTTALVSDPKE</sequence>
<gene>
    <name type="primary">TTR</name>
</gene>
<evidence type="ECO:0000250" key="1"/>
<evidence type="ECO:0000250" key="2">
    <source>
        <dbReference type="UniProtKB" id="P02766"/>
    </source>
</evidence>
<evidence type="ECO:0000255" key="3"/>
<evidence type="ECO:0000269" key="4">
    <source>
    </source>
</evidence>
<evidence type="ECO:0000305" key="5"/>
<protein>
    <recommendedName>
        <fullName>Transthyretin</fullName>
    </recommendedName>
    <alternativeName>
        <fullName>Prealbumin</fullName>
    </alternativeName>
</protein>
<name>TTHY_SORAR</name>
<reference key="1">
    <citation type="journal article" date="2000" name="Mol. Biol. Evol.">
        <title>The evolution of the thyroid hormone distributor protein transthyretin in the order insectivora, class mammalia.</title>
        <authorList>
            <person name="Prapunpoj P."/>
            <person name="Richardson S.J."/>
            <person name="Fumagalli L."/>
            <person name="Schreiber G."/>
        </authorList>
    </citation>
    <scope>NUCLEOTIDE SEQUENCE [MRNA]</scope>
    <scope>PROTEIN SEQUENCE OF 21-25</scope>
    <scope>FUNCTION</scope>
    <scope>SUBCELLULAR LOCATION</scope>
    <scope>TISSUE SPECIFICITY</scope>
    <source>
        <tissue>Liver</tissue>
    </source>
</reference>
<proteinExistence type="evidence at protein level"/>
<comment type="function">
    <text evidence="4">Thyroid hormone-binding protein. Probably transports thyroxine from the bloodstream to the brain.</text>
</comment>
<comment type="subunit">
    <text evidence="1">Homotetramer. Dimer of dimers. In the homotetramer, subunits assemble around a central channel that can accommodate two ligand molecules. Interacts with RBP4 (By similarity).</text>
</comment>
<comment type="subcellular location">
    <subcellularLocation>
        <location evidence="4">Secreted</location>
    </subcellularLocation>
</comment>
<comment type="tissue specificity">
    <text evidence="4">Detected in serum (at protein level). Detected in liver.</text>
</comment>
<comment type="PTM">
    <text evidence="2">Sulfonation of the reactive cysteine Cys-30 enhances the stability of the native conformation of TTR, avoiding misassembly of the protein leading to amyloid formation.</text>
</comment>
<comment type="similarity">
    <text evidence="5">Belongs to the transthyretin family.</text>
</comment>
<accession>O46654</accession>